<organism>
    <name type="scientific">Danio rerio</name>
    <name type="common">Zebrafish</name>
    <name type="synonym">Brachydanio rerio</name>
    <dbReference type="NCBI Taxonomy" id="7955"/>
    <lineage>
        <taxon>Eukaryota</taxon>
        <taxon>Metazoa</taxon>
        <taxon>Chordata</taxon>
        <taxon>Craniata</taxon>
        <taxon>Vertebrata</taxon>
        <taxon>Euteleostomi</taxon>
        <taxon>Actinopterygii</taxon>
        <taxon>Neopterygii</taxon>
        <taxon>Teleostei</taxon>
        <taxon>Ostariophysi</taxon>
        <taxon>Cypriniformes</taxon>
        <taxon>Danionidae</taxon>
        <taxon>Danioninae</taxon>
        <taxon>Danio</taxon>
    </lineage>
</organism>
<proteinExistence type="evidence at protein level"/>
<accession>Q9I9N6</accession>
<gene>
    <name type="primary">pycard</name>
    <name type="synonym">asc</name>
    <name type="synonym">asc1</name>
</gene>
<evidence type="ECO:0000250" key="1">
    <source>
        <dbReference type="UniProtKB" id="Q9ULZ3"/>
    </source>
</evidence>
<evidence type="ECO:0000255" key="2">
    <source>
        <dbReference type="PROSITE-ProRule" id="PRU00046"/>
    </source>
</evidence>
<evidence type="ECO:0000255" key="3">
    <source>
        <dbReference type="PROSITE-ProRule" id="PRU00061"/>
    </source>
</evidence>
<evidence type="ECO:0000269" key="4">
    <source>
    </source>
</evidence>
<evidence type="ECO:0000269" key="5">
    <source>
    </source>
</evidence>
<evidence type="ECO:0000269" key="6">
    <source>
    </source>
</evidence>
<evidence type="ECO:0000269" key="7">
    <source>
    </source>
</evidence>
<evidence type="ECO:0000269" key="8">
    <source>
    </source>
</evidence>
<evidence type="ECO:0000269" key="9">
    <source>
    </source>
</evidence>
<evidence type="ECO:0007744" key="10">
    <source>
        <dbReference type="PDB" id="5GPP"/>
    </source>
</evidence>
<evidence type="ECO:0007744" key="11">
    <source>
        <dbReference type="PDB" id="5GPQ"/>
    </source>
</evidence>
<evidence type="ECO:0007829" key="12">
    <source>
        <dbReference type="PDB" id="5GPP"/>
    </source>
</evidence>
<evidence type="ECO:0007829" key="13">
    <source>
        <dbReference type="PDB" id="5GPQ"/>
    </source>
</evidence>
<protein>
    <recommendedName>
        <fullName>Apoptosis-associated speck-like protein containing a CARD</fullName>
    </recommendedName>
    <alternativeName>
        <fullName>PYD and CARD domain-containing protein</fullName>
    </alternativeName>
</protein>
<dbReference type="EMBL" id="AF231013">
    <property type="protein sequence ID" value="AAF66956.1"/>
    <property type="molecule type" value="mRNA"/>
</dbReference>
<dbReference type="PDB" id="5GPP">
    <property type="method" value="X-ray"/>
    <property type="resolution" value="2.00 A"/>
    <property type="chains" value="A/B=3-88"/>
</dbReference>
<dbReference type="PDB" id="5GPQ">
    <property type="method" value="X-ray"/>
    <property type="resolution" value="2.10 A"/>
    <property type="chains" value="A=119-201"/>
</dbReference>
<dbReference type="PDBsum" id="5GPP"/>
<dbReference type="PDBsum" id="5GPQ"/>
<dbReference type="SMR" id="Q9I9N6"/>
<dbReference type="ComplexPortal" id="CPX-4947">
    <property type="entry name" value="NLRP1 inflammasome, variant 1"/>
</dbReference>
<dbReference type="ComplexPortal" id="CPX-4948">
    <property type="entry name" value="NLRP1 inflammasome, variant 2"/>
</dbReference>
<dbReference type="FunCoup" id="Q9I9N6">
    <property type="interactions" value="1927"/>
</dbReference>
<dbReference type="IntAct" id="Q9I9N6">
    <property type="interactions" value="1"/>
</dbReference>
<dbReference type="STRING" id="7955.ENSDARP00000055920"/>
<dbReference type="PaxDb" id="7955-ENSDARP00000055920"/>
<dbReference type="AGR" id="ZFIN:ZDB-GENE-000511-2"/>
<dbReference type="ZFIN" id="ZDB-GENE-000511-2">
    <property type="gene designation" value="pycard"/>
</dbReference>
<dbReference type="eggNOG" id="ENOG502S3G5">
    <property type="taxonomic scope" value="Eukaryota"/>
</dbReference>
<dbReference type="InParanoid" id="Q9I9N6"/>
<dbReference type="PhylomeDB" id="Q9I9N6"/>
<dbReference type="Reactome" id="R-DRE-111458">
    <property type="pathway name" value="Formation of apoptosome"/>
</dbReference>
<dbReference type="Reactome" id="R-DRE-6798695">
    <property type="pathway name" value="Neutrophil degranulation"/>
</dbReference>
<dbReference type="Reactome" id="R-DRE-844455">
    <property type="pathway name" value="The NLRP1 inflammasome"/>
</dbReference>
<dbReference type="Reactome" id="R-DRE-844456">
    <property type="pathway name" value="The NLRP3 inflammasome"/>
</dbReference>
<dbReference type="Reactome" id="R-DRE-9627069">
    <property type="pathway name" value="Regulation of the apoptosome activity"/>
</dbReference>
<dbReference type="PRO" id="PR:Q9I9N6"/>
<dbReference type="Proteomes" id="UP000000437">
    <property type="component" value="Unplaced"/>
</dbReference>
<dbReference type="GO" id="GO:0061702">
    <property type="term" value="C:canonical inflammasome complex"/>
    <property type="evidence" value="ECO:0000353"/>
    <property type="project" value="ZFIN"/>
</dbReference>
<dbReference type="GO" id="GO:0005737">
    <property type="term" value="C:cytoplasm"/>
    <property type="evidence" value="ECO:0000303"/>
    <property type="project" value="ComplexPortal"/>
</dbReference>
<dbReference type="GO" id="GO:0072558">
    <property type="term" value="C:NLRP1 inflammasome complex"/>
    <property type="evidence" value="ECO:0000314"/>
    <property type="project" value="ComplexPortal"/>
</dbReference>
<dbReference type="GO" id="GO:0072559">
    <property type="term" value="C:NLRP3 inflammasome complex"/>
    <property type="evidence" value="ECO:0000314"/>
    <property type="project" value="ZFIN"/>
</dbReference>
<dbReference type="GO" id="GO:0140738">
    <property type="term" value="C:NLRP6 inflammasome complex"/>
    <property type="evidence" value="ECO:0000250"/>
    <property type="project" value="UniProtKB"/>
</dbReference>
<dbReference type="GO" id="GO:0005634">
    <property type="term" value="C:nucleus"/>
    <property type="evidence" value="ECO:0000318"/>
    <property type="project" value="GO_Central"/>
</dbReference>
<dbReference type="GO" id="GO:0140608">
    <property type="term" value="F:cysteine-type endopeptidase activator activity"/>
    <property type="evidence" value="ECO:0000318"/>
    <property type="project" value="GO_Central"/>
</dbReference>
<dbReference type="GO" id="GO:0038187">
    <property type="term" value="F:pattern recognition receptor activity"/>
    <property type="evidence" value="ECO:0000318"/>
    <property type="project" value="GO_Central"/>
</dbReference>
<dbReference type="GO" id="GO:0032090">
    <property type="term" value="F:Pyrin domain binding"/>
    <property type="evidence" value="ECO:0000353"/>
    <property type="project" value="ZFIN"/>
</dbReference>
<dbReference type="GO" id="GO:0002218">
    <property type="term" value="P:activation of innate immune response"/>
    <property type="evidence" value="ECO:0000318"/>
    <property type="project" value="GO_Central"/>
</dbReference>
<dbReference type="GO" id="GO:0042742">
    <property type="term" value="P:defense response to bacterium"/>
    <property type="evidence" value="ECO:0000316"/>
    <property type="project" value="ZFIN"/>
</dbReference>
<dbReference type="GO" id="GO:0006954">
    <property type="term" value="P:inflammatory response"/>
    <property type="evidence" value="ECO:0000318"/>
    <property type="project" value="GO_Central"/>
</dbReference>
<dbReference type="GO" id="GO:0045087">
    <property type="term" value="P:innate immune response"/>
    <property type="evidence" value="ECO:0000316"/>
    <property type="project" value="ZFIN"/>
</dbReference>
<dbReference type="GO" id="GO:0097193">
    <property type="term" value="P:intrinsic apoptotic signaling pathway"/>
    <property type="evidence" value="ECO:0000318"/>
    <property type="project" value="GO_Central"/>
</dbReference>
<dbReference type="GO" id="GO:0002221">
    <property type="term" value="P:pattern recognition receptor signaling pathway"/>
    <property type="evidence" value="ECO:0000303"/>
    <property type="project" value="ComplexPortal"/>
</dbReference>
<dbReference type="GO" id="GO:0050729">
    <property type="term" value="P:positive regulation of inflammatory response"/>
    <property type="evidence" value="ECO:0000303"/>
    <property type="project" value="ComplexPortal"/>
</dbReference>
<dbReference type="GO" id="GO:0032731">
    <property type="term" value="P:positive regulation of interleukin-1 beta production"/>
    <property type="evidence" value="ECO:0000303"/>
    <property type="project" value="ComplexPortal"/>
</dbReference>
<dbReference type="GO" id="GO:0042981">
    <property type="term" value="P:regulation of apoptotic process"/>
    <property type="evidence" value="ECO:0007669"/>
    <property type="project" value="InterPro"/>
</dbReference>
<dbReference type="GO" id="GO:0050727">
    <property type="term" value="P:regulation of inflammatory response"/>
    <property type="evidence" value="ECO:0000315"/>
    <property type="project" value="ZFIN"/>
</dbReference>
<dbReference type="CDD" id="cd08330">
    <property type="entry name" value="CARD_ASC_NALP1"/>
    <property type="match status" value="1"/>
</dbReference>
<dbReference type="CDD" id="cd08321">
    <property type="entry name" value="Pyrin_ASC-like"/>
    <property type="match status" value="1"/>
</dbReference>
<dbReference type="FunFam" id="1.10.533.10:FF:000144">
    <property type="entry name" value="Apoptosis-associated speck-like protein-containing a CARD"/>
    <property type="match status" value="1"/>
</dbReference>
<dbReference type="Gene3D" id="1.10.533.10">
    <property type="entry name" value="Death Domain, Fas"/>
    <property type="match status" value="2"/>
</dbReference>
<dbReference type="InterPro" id="IPR001315">
    <property type="entry name" value="CARD"/>
</dbReference>
<dbReference type="InterPro" id="IPR033516">
    <property type="entry name" value="CARD8/ASC/NALP1_CARD"/>
</dbReference>
<dbReference type="InterPro" id="IPR004020">
    <property type="entry name" value="DAPIN"/>
</dbReference>
<dbReference type="InterPro" id="IPR011029">
    <property type="entry name" value="DEATH-like_dom_sf"/>
</dbReference>
<dbReference type="InterPro" id="IPR051249">
    <property type="entry name" value="NLRP_Inflammasome"/>
</dbReference>
<dbReference type="PANTHER" id="PTHR46985:SF2">
    <property type="entry name" value="APOPTOSIS-ASSOCIATED SPECK-LIKE PROTEIN CONTAINING A CARD"/>
    <property type="match status" value="1"/>
</dbReference>
<dbReference type="PANTHER" id="PTHR46985">
    <property type="entry name" value="NACHT, LRR AND PYD DOMAINS-CONTAINING PROTEIN 1"/>
    <property type="match status" value="1"/>
</dbReference>
<dbReference type="Pfam" id="PF00619">
    <property type="entry name" value="CARD"/>
    <property type="match status" value="1"/>
</dbReference>
<dbReference type="Pfam" id="PF02758">
    <property type="entry name" value="PYRIN"/>
    <property type="match status" value="1"/>
</dbReference>
<dbReference type="SMART" id="SM01289">
    <property type="entry name" value="PYRIN"/>
    <property type="match status" value="1"/>
</dbReference>
<dbReference type="SUPFAM" id="SSF47986">
    <property type="entry name" value="DEATH domain"/>
    <property type="match status" value="2"/>
</dbReference>
<dbReference type="PROSITE" id="PS50209">
    <property type="entry name" value="CARD"/>
    <property type="match status" value="1"/>
</dbReference>
<dbReference type="PROSITE" id="PS50824">
    <property type="entry name" value="DAPIN"/>
    <property type="match status" value="1"/>
</dbReference>
<feature type="chain" id="PRO_0000064691" description="Apoptosis-associated speck-like protein containing a CARD">
    <location>
        <begin position="1"/>
        <end position="203"/>
    </location>
</feature>
<feature type="domain" description="Pyrin" evidence="3">
    <location>
        <begin position="1"/>
        <end position="91"/>
    </location>
</feature>
<feature type="domain" description="CARD" evidence="2">
    <location>
        <begin position="112"/>
        <end position="203"/>
    </location>
</feature>
<feature type="mutagenesis site" description="Impairs inflammasome activity, but does not impair speck formation." evidence="7">
    <original>Q</original>
    <variation>A</variation>
    <location>
        <position position="10"/>
    </location>
</feature>
<feature type="mutagenesis site" description="Defective speck formation and impairs inflammasome activity." evidence="7">
    <original>E</original>
    <variation>R</variation>
    <location>
        <position position="14"/>
    </location>
</feature>
<feature type="mutagenesis site" description="Impairs inflammasome activity, but does not impair speck formation." evidence="7">
    <original>D</original>
    <variation>A</variation>
    <location>
        <position position="19"/>
    </location>
</feature>
<feature type="mutagenesis site" description="Abolishes speck formation and impairs inflammasome activity." evidence="7">
    <original>R</original>
    <variation>E</variation>
    <location>
        <position position="22"/>
    </location>
</feature>
<feature type="mutagenesis site" description="Abolishes speck formation and impairs inflammasome activity." evidence="7">
    <original>D</original>
    <variation>R</variation>
    <location>
        <position position="47"/>
    </location>
</feature>
<feature type="mutagenesis site" description="Abolishes speck formation and impairs inflammasome activity." evidence="7">
    <original>D</original>
    <variation>R</variation>
    <location>
        <position position="50"/>
    </location>
</feature>
<feature type="helix" evidence="12">
    <location>
        <begin position="3"/>
        <end position="16"/>
    </location>
</feature>
<feature type="helix" evidence="12">
    <location>
        <begin position="18"/>
        <end position="30"/>
    </location>
</feature>
<feature type="strand" evidence="12">
    <location>
        <begin position="33"/>
        <end position="35"/>
    </location>
</feature>
<feature type="helix" evidence="12">
    <location>
        <begin position="39"/>
        <end position="43"/>
    </location>
</feature>
<feature type="helix" evidence="12">
    <location>
        <begin position="48"/>
        <end position="59"/>
    </location>
</feature>
<feature type="helix" evidence="12">
    <location>
        <begin position="61"/>
        <end position="74"/>
    </location>
</feature>
<feature type="helix" evidence="12">
    <location>
        <begin position="78"/>
        <end position="86"/>
    </location>
</feature>
<feature type="helix" evidence="13">
    <location>
        <begin position="119"/>
        <end position="130"/>
    </location>
</feature>
<feature type="helix" evidence="13">
    <location>
        <begin position="135"/>
        <end position="143"/>
    </location>
</feature>
<feature type="helix" evidence="13">
    <location>
        <begin position="149"/>
        <end position="156"/>
    </location>
</feature>
<feature type="strand" evidence="13">
    <location>
        <begin position="158"/>
        <end position="160"/>
    </location>
</feature>
<feature type="helix" evidence="13">
    <location>
        <begin position="161"/>
        <end position="170"/>
    </location>
</feature>
<feature type="helix" evidence="13">
    <location>
        <begin position="172"/>
        <end position="175"/>
    </location>
</feature>
<feature type="helix" evidence="13">
    <location>
        <begin position="177"/>
        <end position="191"/>
    </location>
</feature>
<feature type="helix" evidence="13">
    <location>
        <begin position="193"/>
        <end position="199"/>
    </location>
</feature>
<comment type="function">
    <text evidence="1 4 8">Functions as a key mediator in apoptosis and inflammation (PubMed:12464617, PubMed:30150286). Promotes caspase-mediated apoptosis (PubMed:12464617). Induces proteolytic processing of caspa and caspa-dependent apoptosis (PubMed:12464617). Involved in innate immune response by acting as an integral adapter in the assembly of various inflammasomes which recruit and activate caspase-1 leading to processing and secretion of pro-inflammatory cytokines (PubMed:30150286). Caspase-1-dependent inflammation leads to macrophage pyroptosis, a form of cell death (By similarity). The function as activating adapter in different types of inflammasomes is mediated by the pyrin and CARD domains and their homotypic interactions (PubMed:30150286). Clustered PYCARD nucleates the formation of caspase-1 filaments through the interaction of their respective CARD domains, acting as a platform for of caspase-1 polymerization (By similarity). Also involved in transcriptional activation of cytokines and chemokines independent of the inflammasome (By similarity).</text>
</comment>
<comment type="subunit">
    <text evidence="4 5 7 8">Self-associates (via pyrin and CARD domains) (PubMed:12464617, PubMed:29791979). Interacts (via pyrin domain) with caspa (via pyrin domain) (PubMed:12464617, PubMed:29791979, PubMed:30150286). Interacts with caspb; the interaction only occurs in the presence of nlrp1 (PubMed:30150286). Component of NLRP1 inflammasomes (PubMed:30150286). Inflammasomes are supramolecular complexes that assemble in the cytosol in response to pathogens and other damage-associated signals and play critical roles in innate immunity and inflammation (PubMed:30150286). The NLRP1 inflammasome is composed of the signal sensor nlrp1, and the adapter pycard (asc), which recruit effector pro-inflammatory caspases caspa and/or caspb (PubMed:30150286). The interaction between nlrp1 and pycard is required for the sequential recruitment of caspa and then caspb (PubMed:30150286). Within the complex caspa is preferentially recruited first and this causes the cleavage of pro-il1b into the midformed il1b (PubMed:30150286). This is followed by the recruitment of caspb, which is activated and cleaves the midformed il1b resulting in il1b maturation (PubMed:30150286). Interacts (via pyrin domain) with NLP3X1 (via pyrin domain) (PubMed:29791979). Interacts with gbp4 (PubMed:27363812).</text>
</comment>
<comment type="subcellular location">
    <subcellularLocation>
        <location evidence="4 8">Cytoplasm</location>
    </subcellularLocation>
    <subcellularLocation>
        <location evidence="7 8">Inflammasome</location>
    </subcellularLocation>
    <text evidence="4 7 8">Co-localizes with nlrp1, caspa and caspb in the cytoplasm (PubMed:30150286). Co-localizes with caspa and caspb independently at large cytoplasmic aggregates, known as specks (PubMed:12464617, PubMed:29791979, PubMed:30150286).</text>
</comment>
<comment type="tissue specificity">
    <text evidence="7">Expressed in the kidney, intestine and gill (PubMed:29791979). Expressed at low levels in the heart (PubMed:29791979).</text>
</comment>
<comment type="developmental stage">
    <text evidence="4 7">First expressed during embryonic development at 1 somite at 10 hours post-fertilization (hpf) (PubMed:29791979). During embryonic development, expressed in the epidermis, mouth and pharyngeal arches at 48 and 72 hpf (PubMed:12464617).</text>
</comment>
<comment type="induction">
    <text evidence="8">Up-regulated in response to infection with the bacteria E.tarda.</text>
</comment>
<comment type="domain">
    <text evidence="1">The pyrin domain mediates homotypic interactions with pyrin domain of other proteins.</text>
</comment>
<comment type="disruption phenotype">
    <text evidence="6 9">Morpholino knockdown in one-cell embryos results in reduced caspa activity and impairs caspa activity in response to infection with the bacterium S.typhimurium (PubMed:29123523). In addition, there is increased susceptibility to the bacterium S.typhimurium (PubMed:29123523). According to PubMed:36112693 knockout animals are viable until adulthood and are indistinguishable from wild-type in appearance (PubMed:36112693).</text>
</comment>
<sequence>MAESFKEHLQEAFEDLGADNLRKFKSKLGDRRQEPRVTKSAIEKLKDEIDLADLMVGVFTSKDAVSVTVEILRAIKCNAVADDLLRNTGQSESKGALSDESKCASSKAVSKVAFSKVNFIDEHWKELIDRVNNVDPILDILRQKKVITNEDYCTIRNKETPQKKMRELLTGPITCAGNKGKEVLYDALRESNKFLMDDLEDAE</sequence>
<name>ASC_DANRE</name>
<reference key="1">
    <citation type="journal article" date="2000" name="Cell Death Differ.">
        <title>Genes with homology to mammalian apoptosis regulators identified in zebrafish.</title>
        <authorList>
            <person name="Inohara N."/>
            <person name="Nunez G."/>
        </authorList>
    </citation>
    <scope>NUCLEOTIDE SEQUENCE [MRNA]</scope>
</reference>
<reference key="2">
    <citation type="journal article" date="2003" name="J. Biol. Chem.">
        <title>Caspy, a zebrafish caspase, activated by ASC oligomerization is required for pharyngeal arch development.</title>
        <authorList>
            <person name="Masumoto J."/>
            <person name="Zhou W."/>
            <person name="Chen F.F."/>
            <person name="Su F."/>
            <person name="Kuwada J.Y."/>
            <person name="Hidaka E."/>
            <person name="Katsuyama T."/>
            <person name="Sagara J."/>
            <person name="Taniguchi S."/>
            <person name="Ngo-Hazelett P."/>
            <person name="Postlethwait J.H."/>
            <person name="Nunez G."/>
            <person name="Inohara N."/>
        </authorList>
    </citation>
    <scope>FUNCTION</scope>
    <scope>SELF-ASSOCIATION</scope>
    <scope>INTERACTION WITH CASPA</scope>
    <scope>SUBCELLULAR LOCATION</scope>
    <scope>DEVELOPMENTAL STAGE</scope>
</reference>
<reference key="3">
    <citation type="journal article" date="2016" name="Nat. Commun.">
        <title>Neutrophils mediate Salmonella Typhimurium clearance through the GBP4 inflammasome-dependent production of prostaglandins.</title>
        <authorList>
            <person name="Tyrkalska S.D."/>
            <person name="Candel S."/>
            <person name="Angosto D."/>
            <person name="Gomez-Abellan V."/>
            <person name="Martin-Sanchez F."/>
            <person name="Garcia-Moreno D."/>
            <person name="Zapata-Perez R."/>
            <person name="Sanchez-Ferrer A."/>
            <person name="Sepulcre M.P."/>
            <person name="Pelegrin P."/>
            <person name="Mulero V."/>
        </authorList>
    </citation>
    <scope>INTERACTION WITH GBP4</scope>
</reference>
<reference key="4">
    <citation type="journal article" date="2017" name="Front. Immunol.">
        <title>Identification of an Evolutionarily Conserved Ankyrin Domain-Containing Protein, Caiap, Which Regulates Inflammasome-Dependent Resistance to Bacterial Infection.</title>
        <authorList>
            <person name="Tyrkalska S.D."/>
            <person name="Candel S."/>
            <person name="Perez-Oliva A.B."/>
            <person name="Valera A."/>
            <person name="Alcaraz-Perez F."/>
            <person name="Garcia-Moreno D."/>
            <person name="Cayuela M.L."/>
            <person name="Mulero V."/>
        </authorList>
    </citation>
    <scope>DISRUPTION PHENOTYPE</scope>
</reference>
<reference key="5">
    <citation type="journal article" date="2018" name="J. Immunol.">
        <title>Characterization of an NLRP1 Inflammasome from Zebrafish Reveals a Unique Sequential Activation Mechanism Underlying Inflammatory Caspases in Ancient Vertebrates.</title>
        <authorList>
            <person name="Li J.Y."/>
            <person name="Gao K."/>
            <person name="Shao T."/>
            <person name="Fan D.D."/>
            <person name="Hu C.B."/>
            <person name="Sun C.C."/>
            <person name="Dong W.R."/>
            <person name="Lin A.F."/>
            <person name="Xiang L.X."/>
            <person name="Shao J.Z."/>
        </authorList>
    </citation>
    <scope>FUNCTION</scope>
    <scope>IDENTIFICATION IN NLRP1 INFLAMMASOME</scope>
    <scope>INTERACTION WITH CASPA AND CASPB</scope>
    <scope>SUBCELLULAR LOCATION</scope>
    <scope>INDUCTION BY E.TARDA</scope>
</reference>
<reference key="6">
    <citation type="journal article" date="2022" name="Sci. Immunol.">
        <title>DPP9 deficiency: An inflammasomopathy that can be rescued by lowering NLRP1/IL-1 signaling.</title>
        <authorList>
            <person name="Harapas C.R."/>
            <person name="Robinson K.S."/>
            <person name="Lay K."/>
            <person name="Wong J."/>
            <person name="Moreno Traspas R."/>
            <person name="Nabavizadeh N."/>
            <person name="Rass-Rothschild A."/>
            <person name="Boisson B."/>
            <person name="Drutman S.B."/>
            <person name="Laohamonthonkul P."/>
            <person name="Bonner D."/>
            <person name="Xiong J.R."/>
            <person name="Gorrell M.D."/>
            <person name="Davidson S."/>
            <person name="Yu C.H."/>
            <person name="Fleming M.D."/>
            <person name="Gudera J."/>
            <person name="Stein J."/>
            <person name="Ben-Harosh M."/>
            <person name="Groopman E."/>
            <person name="Shimamura A."/>
            <person name="Tamary H."/>
            <person name="Kayserili H."/>
            <person name="Hatipoglu N."/>
            <person name="Casanova J.L."/>
            <person name="Bernstein J.A."/>
            <person name="Zhong F.L."/>
            <person name="Masters S.L."/>
            <person name="Reversade B."/>
        </authorList>
    </citation>
    <scope>DISRUPTION PHENOTYPE</scope>
</reference>
<reference evidence="10 11" key="7">
    <citation type="journal article" date="2018" name="FEBS J.">
        <title>Functional and structural characterization of zebrafish ASC.</title>
        <authorList>
            <person name="Li Y."/>
            <person name="Huang Y."/>
            <person name="Cao X."/>
            <person name="Yin X."/>
            <person name="Jin X."/>
            <person name="Liu S."/>
            <person name="Jiang J."/>
            <person name="Jiang W."/>
            <person name="Xiao T.S."/>
            <person name="Zhou R."/>
            <person name="Cai G."/>
            <person name="Hu B."/>
            <person name="Jin T."/>
        </authorList>
    </citation>
    <scope>X-RAY CRYSTALLOGRAPHY (2.00 ANGSTROMS) OF 3-88</scope>
    <scope>SUBUNIT</scope>
    <scope>INTERACTION WITH CASPA AND NLP3X1</scope>
    <scope>SUBCELLULAR LOCATION</scope>
    <scope>TISSUE SPECIFICITY</scope>
    <scope>DEVELOPMENTAL STAGE</scope>
    <scope>MUTAGENESIS OF GLN-10; GLU-14; ASP-19; ARG-22; ASP-47 AND ASP-50</scope>
</reference>
<keyword id="KW-0002">3D-structure</keyword>
<keyword id="KW-0053">Apoptosis</keyword>
<keyword id="KW-0963">Cytoplasm</keyword>
<keyword id="KW-0391">Immunity</keyword>
<keyword id="KW-1271">Inflammasome</keyword>
<keyword id="KW-0395">Inflammatory response</keyword>
<keyword id="KW-0399">Innate immunity</keyword>
<keyword id="KW-1185">Reference proteome</keyword>
<keyword id="KW-0043">Tumor suppressor</keyword>